<organism>
    <name type="scientific">Vanderwaltozyma polyspora (strain ATCC 22028 / DSM 70294 / BCRC 21397 / CBS 2163 / NBRC 10782 / NRRL Y-8283 / UCD 57-17)</name>
    <name type="common">Kluyveromyces polysporus</name>
    <dbReference type="NCBI Taxonomy" id="436907"/>
    <lineage>
        <taxon>Eukaryota</taxon>
        <taxon>Fungi</taxon>
        <taxon>Dikarya</taxon>
        <taxon>Ascomycota</taxon>
        <taxon>Saccharomycotina</taxon>
        <taxon>Saccharomycetes</taxon>
        <taxon>Saccharomycetales</taxon>
        <taxon>Saccharomycetaceae</taxon>
        <taxon>Vanderwaltozyma</taxon>
    </lineage>
</organism>
<name>XPOT_VANPO</name>
<gene>
    <name type="primary">LOS1</name>
    <name type="ORF">Kpol_1018p179</name>
</gene>
<feature type="chain" id="PRO_0000343108" description="Exportin-T">
    <location>
        <begin position="1"/>
        <end position="1062"/>
    </location>
</feature>
<sequence length="1062" mass="119811">MLQRIREVVSLANNPATDAVTKKQALDYLEQMKSDPNAIQIFCSMLTDSGSDDLCIFVSLQILCDLVAMNTSVDLLFVKNSIVEFLRGKINRNIKDAEFLRNKISELITRLFINMYGEVNGNQWNTFYKDLIALLSIDSLLTGPSEHFSPLGLDYFARICIQINSEVADQTFLRSKDEQTKNNNLKDTMRLEDVQTLVTIWFNCLKSLIIQQQNFELAVIILSCIGAFISWVDITLIVNPEYINIIYGYLDYSDTKIACSQCLCEIISKKMKPVDKLTLLSMLNLTDKVASIGEDDIDVYEKLAKLASSVGLELSIILEQCNEGVQSNETLEVANAADQQVLNQVAPLVLKFMSHEYDSVTEQCFPFISQYLAILKKLFAIGGKPGTAVAINSKRQPLDEAHQNFLVSLLNVCFEKMKIDDSSESNSEEAIEEFNDIVRSKLKVFQDSIAVINPNIYLENISNHIQVSLAGTDWTVLELAIFQMHNLCESIRNNLFGLNKTEISTSAATQLMHKFMALLLQNSNLFQMDNRYVQILFFELVVRHYTFLGSDTKDAVSLLNIFCSEFGMFNKSEKVILRTWYLFTRFVKISKPHLSVSVLSQLVSKVMPLLVIKTVTPSVDGSEDCDTTFDSQLYIFEGVGMLIGANADNTYDILDQVLTPLFTDLERCISLQSQSPSIVLQSHHILMAIGTLARGTHMGLVPENQVNNALVNEKLIHRTLIEKFSNIAEVVLVTFSYFNKHETIRDASRFTFARLIPILNGGIVTFASKLVVLFLESDLKTMEMNDFLGFLGQMVHTFHGDENFYDLFDNLLTPVINKLHILLDHLESESNESNWYGEQNGRENNGNDVSGARTSKTVVVTDSYRDKILLKKAYYGFLQSFVTNNVTSLLLSNRNRSILPTILGDLLSYNPQEIQETSTMKLALNVLVNFIKFFGSGGCTDVNDVHASSIGKLDGLNEYFITRTIPLAFEIPFKPQYKFNINDGSCRVIACDLSRVLKEMYIQSGGGQDVNSNPALKYLTEVYFPQIQLPSELGMELIQMLITQDTKAFEKYYVTLINRLTS</sequence>
<proteinExistence type="inferred from homology"/>
<reference key="1">
    <citation type="journal article" date="2007" name="Proc. Natl. Acad. Sci. U.S.A.">
        <title>Independent sorting-out of thousands of duplicated gene pairs in two yeast species descended from a whole-genome duplication.</title>
        <authorList>
            <person name="Scannell D.R."/>
            <person name="Frank A.C."/>
            <person name="Conant G.C."/>
            <person name="Byrne K.P."/>
            <person name="Woolfit M."/>
            <person name="Wolfe K.H."/>
        </authorList>
    </citation>
    <scope>NUCLEOTIDE SEQUENCE [LARGE SCALE GENOMIC DNA]</scope>
    <source>
        <strain>ATCC 22028 / DSM 70294 / BCRC 21397 / CBS 2163 / NBRC 10782 / NRRL Y-8283 / UCD 57-17</strain>
    </source>
</reference>
<dbReference type="EMBL" id="DS480378">
    <property type="protein sequence ID" value="EDO19639.1"/>
    <property type="molecule type" value="Genomic_DNA"/>
</dbReference>
<dbReference type="RefSeq" id="XP_001647497.1">
    <property type="nucleotide sequence ID" value="XM_001647447.1"/>
</dbReference>
<dbReference type="SMR" id="A7TE19"/>
<dbReference type="FunCoup" id="A7TE19">
    <property type="interactions" value="1101"/>
</dbReference>
<dbReference type="STRING" id="436907.A7TE19"/>
<dbReference type="GeneID" id="5548005"/>
<dbReference type="KEGG" id="vpo:Kpol_1018p179"/>
<dbReference type="eggNOG" id="KOG2021">
    <property type="taxonomic scope" value="Eukaryota"/>
</dbReference>
<dbReference type="HOGENOM" id="CLU_004414_0_1_1"/>
<dbReference type="InParanoid" id="A7TE19"/>
<dbReference type="OMA" id="HEMFLFG"/>
<dbReference type="OrthoDB" id="26399at2759"/>
<dbReference type="PhylomeDB" id="A7TE19"/>
<dbReference type="Proteomes" id="UP000000267">
    <property type="component" value="Unassembled WGS sequence"/>
</dbReference>
<dbReference type="GO" id="GO:0005737">
    <property type="term" value="C:cytoplasm"/>
    <property type="evidence" value="ECO:0007669"/>
    <property type="project" value="UniProtKB-SubCell"/>
</dbReference>
<dbReference type="GO" id="GO:0016363">
    <property type="term" value="C:nuclear matrix"/>
    <property type="evidence" value="ECO:0007669"/>
    <property type="project" value="EnsemblFungi"/>
</dbReference>
<dbReference type="GO" id="GO:0005643">
    <property type="term" value="C:nuclear pore"/>
    <property type="evidence" value="ECO:0007669"/>
    <property type="project" value="TreeGrafter"/>
</dbReference>
<dbReference type="GO" id="GO:0031267">
    <property type="term" value="F:small GTPase binding"/>
    <property type="evidence" value="ECO:0007669"/>
    <property type="project" value="EnsemblFungi"/>
</dbReference>
<dbReference type="GO" id="GO:0000049">
    <property type="term" value="F:tRNA binding"/>
    <property type="evidence" value="ECO:0007669"/>
    <property type="project" value="UniProtKB-KW"/>
</dbReference>
<dbReference type="GO" id="GO:0008033">
    <property type="term" value="P:tRNA processing"/>
    <property type="evidence" value="ECO:0007669"/>
    <property type="project" value="UniProtKB-KW"/>
</dbReference>
<dbReference type="GO" id="GO:0071528">
    <property type="term" value="P:tRNA re-export from nucleus"/>
    <property type="evidence" value="ECO:0007669"/>
    <property type="project" value="EnsemblFungi"/>
</dbReference>
<dbReference type="Gene3D" id="1.25.10.10">
    <property type="entry name" value="Leucine-rich Repeat Variant"/>
    <property type="match status" value="1"/>
</dbReference>
<dbReference type="InterPro" id="IPR011989">
    <property type="entry name" value="ARM-like"/>
</dbReference>
<dbReference type="InterPro" id="IPR016024">
    <property type="entry name" value="ARM-type_fold"/>
</dbReference>
<dbReference type="InterPro" id="IPR013598">
    <property type="entry name" value="Exportin-1/Importin-b-like"/>
</dbReference>
<dbReference type="InterPro" id="IPR045546">
    <property type="entry name" value="Exportin-T_C"/>
</dbReference>
<dbReference type="InterPro" id="IPR040017">
    <property type="entry name" value="XPOT"/>
</dbReference>
<dbReference type="PANTHER" id="PTHR15952:SF11">
    <property type="entry name" value="EXPORTIN-T"/>
    <property type="match status" value="1"/>
</dbReference>
<dbReference type="PANTHER" id="PTHR15952">
    <property type="entry name" value="EXPORTIN-T/LOS1"/>
    <property type="match status" value="1"/>
</dbReference>
<dbReference type="Pfam" id="PF19282">
    <property type="entry name" value="Exportin-T"/>
    <property type="match status" value="2"/>
</dbReference>
<dbReference type="Pfam" id="PF08389">
    <property type="entry name" value="Xpo1"/>
    <property type="match status" value="1"/>
</dbReference>
<dbReference type="SUPFAM" id="SSF48371">
    <property type="entry name" value="ARM repeat"/>
    <property type="match status" value="1"/>
</dbReference>
<comment type="function">
    <text evidence="1">tRNA nucleus export receptor which facilitates tRNA translocation across the nuclear pore complex. Involved in pre-tRNA splicing, probably by affecting the interaction of pre-tRNA with splicing endonuclease (By similarity).</text>
</comment>
<comment type="subcellular location">
    <subcellularLocation>
        <location evidence="1">Nucleus</location>
    </subcellularLocation>
    <subcellularLocation>
        <location evidence="1">Cytoplasm</location>
    </subcellularLocation>
    <text evidence="1">Shuttles between the nucleus and the cytoplasm.</text>
</comment>
<comment type="similarity">
    <text evidence="2">Belongs to the exportin family.</text>
</comment>
<evidence type="ECO:0000250" key="1"/>
<evidence type="ECO:0000305" key="2"/>
<accession>A7TE19</accession>
<keyword id="KW-0963">Cytoplasm</keyword>
<keyword id="KW-0539">Nucleus</keyword>
<keyword id="KW-1185">Reference proteome</keyword>
<keyword id="KW-0694">RNA-binding</keyword>
<keyword id="KW-0813">Transport</keyword>
<keyword id="KW-0819">tRNA processing</keyword>
<keyword id="KW-0820">tRNA-binding</keyword>
<protein>
    <recommendedName>
        <fullName>Exportin-T</fullName>
    </recommendedName>
    <alternativeName>
        <fullName>Exportin(tRNA)</fullName>
    </alternativeName>
    <alternativeName>
        <fullName>Karyopherin-beta</fullName>
    </alternativeName>
    <alternativeName>
        <fullName>tRNA exportin</fullName>
    </alternativeName>
</protein>